<feature type="chain" id="PRO_1000084725" description="Probable tRNA pseudouridine synthase B">
    <location>
        <begin position="1"/>
        <end position="333"/>
    </location>
</feature>
<feature type="domain" description="PUA" evidence="1">
    <location>
        <begin position="238"/>
        <end position="313"/>
    </location>
</feature>
<feature type="active site" description="Nucleophile" evidence="1">
    <location>
        <position position="71"/>
    </location>
</feature>
<reference key="1">
    <citation type="submission" date="2007-02" db="EMBL/GenBank/DDBJ databases">
        <title>Complete sequence of Pyrobaculum calidifontis JCM 11548.</title>
        <authorList>
            <consortium name="US DOE Joint Genome Institute"/>
            <person name="Copeland A."/>
            <person name="Lucas S."/>
            <person name="Lapidus A."/>
            <person name="Barry K."/>
            <person name="Glavina del Rio T."/>
            <person name="Dalin E."/>
            <person name="Tice H."/>
            <person name="Pitluck S."/>
            <person name="Chain P."/>
            <person name="Malfatti S."/>
            <person name="Shin M."/>
            <person name="Vergez L."/>
            <person name="Schmutz J."/>
            <person name="Larimer F."/>
            <person name="Land M."/>
            <person name="Hauser L."/>
            <person name="Kyrpides N."/>
            <person name="Mikhailova N."/>
            <person name="Cozen A.E."/>
            <person name="Fitz-Gibbon S.T."/>
            <person name="House C.H."/>
            <person name="Saltikov C."/>
            <person name="Lowe T.M."/>
            <person name="Richardson P."/>
        </authorList>
    </citation>
    <scope>NUCLEOTIDE SEQUENCE [LARGE SCALE GENOMIC DNA]</scope>
    <source>
        <strain>DSM 21063 / JCM 11548 / VA1</strain>
    </source>
</reference>
<name>TRUB_PYRCJ</name>
<accession>A3MS77</accession>
<comment type="function">
    <text evidence="1">Could be responsible for synthesis of pseudouridine from uracil-55 in the psi GC loop of transfer RNAs.</text>
</comment>
<comment type="catalytic activity">
    <reaction evidence="1">
        <text>uridine(55) in tRNA = pseudouridine(55) in tRNA</text>
        <dbReference type="Rhea" id="RHEA:42532"/>
        <dbReference type="Rhea" id="RHEA-COMP:10101"/>
        <dbReference type="Rhea" id="RHEA-COMP:10102"/>
        <dbReference type="ChEBI" id="CHEBI:65314"/>
        <dbReference type="ChEBI" id="CHEBI:65315"/>
        <dbReference type="EC" id="5.4.99.25"/>
    </reaction>
</comment>
<comment type="similarity">
    <text evidence="1">Belongs to the pseudouridine synthase TruB family. Type 2 subfamily.</text>
</comment>
<dbReference type="EC" id="5.4.99.25" evidence="1"/>
<dbReference type="EMBL" id="CP000561">
    <property type="protein sequence ID" value="ABO07494.1"/>
    <property type="molecule type" value="Genomic_DNA"/>
</dbReference>
<dbReference type="RefSeq" id="WP_011848751.1">
    <property type="nucleotide sequence ID" value="NC_009073.1"/>
</dbReference>
<dbReference type="SMR" id="A3MS77"/>
<dbReference type="STRING" id="410359.Pcal_0054"/>
<dbReference type="GeneID" id="4910203"/>
<dbReference type="KEGG" id="pcl:Pcal_0054"/>
<dbReference type="eggNOG" id="arCOG00987">
    <property type="taxonomic scope" value="Archaea"/>
</dbReference>
<dbReference type="HOGENOM" id="CLU_032087_3_0_2"/>
<dbReference type="OrthoDB" id="35866at2157"/>
<dbReference type="Proteomes" id="UP000001431">
    <property type="component" value="Chromosome"/>
</dbReference>
<dbReference type="GO" id="GO:0003723">
    <property type="term" value="F:RNA binding"/>
    <property type="evidence" value="ECO:0007669"/>
    <property type="project" value="InterPro"/>
</dbReference>
<dbReference type="GO" id="GO:0160148">
    <property type="term" value="F:tRNA pseudouridine(55) synthase activity"/>
    <property type="evidence" value="ECO:0007669"/>
    <property type="project" value="UniProtKB-EC"/>
</dbReference>
<dbReference type="GO" id="GO:0000495">
    <property type="term" value="P:box H/ACA sno(s)RNA 3'-end processing"/>
    <property type="evidence" value="ECO:0007669"/>
    <property type="project" value="TreeGrafter"/>
</dbReference>
<dbReference type="GO" id="GO:1990481">
    <property type="term" value="P:mRNA pseudouridine synthesis"/>
    <property type="evidence" value="ECO:0007669"/>
    <property type="project" value="TreeGrafter"/>
</dbReference>
<dbReference type="GO" id="GO:0031118">
    <property type="term" value="P:rRNA pseudouridine synthesis"/>
    <property type="evidence" value="ECO:0007669"/>
    <property type="project" value="TreeGrafter"/>
</dbReference>
<dbReference type="GO" id="GO:0031120">
    <property type="term" value="P:snRNA pseudouridine synthesis"/>
    <property type="evidence" value="ECO:0007669"/>
    <property type="project" value="TreeGrafter"/>
</dbReference>
<dbReference type="GO" id="GO:0031119">
    <property type="term" value="P:tRNA pseudouridine synthesis"/>
    <property type="evidence" value="ECO:0007669"/>
    <property type="project" value="UniProtKB-UniRule"/>
</dbReference>
<dbReference type="CDD" id="cd02572">
    <property type="entry name" value="PseudoU_synth_hDyskerin"/>
    <property type="match status" value="1"/>
</dbReference>
<dbReference type="CDD" id="cd21148">
    <property type="entry name" value="PUA_Cbf5"/>
    <property type="match status" value="1"/>
</dbReference>
<dbReference type="FunFam" id="3.30.2350.10:FF:000001">
    <property type="entry name" value="H/ACA ribonucleoprotein complex subunit CBF5"/>
    <property type="match status" value="1"/>
</dbReference>
<dbReference type="Gene3D" id="3.30.2350.10">
    <property type="entry name" value="Pseudouridine synthase"/>
    <property type="match status" value="1"/>
</dbReference>
<dbReference type="Gene3D" id="2.30.130.10">
    <property type="entry name" value="PUA domain"/>
    <property type="match status" value="1"/>
</dbReference>
<dbReference type="HAMAP" id="MF_01081">
    <property type="entry name" value="TruB_arch"/>
    <property type="match status" value="1"/>
</dbReference>
<dbReference type="InterPro" id="IPR012960">
    <property type="entry name" value="Dyskerin-like"/>
</dbReference>
<dbReference type="InterPro" id="IPR020103">
    <property type="entry name" value="PsdUridine_synth_cat_dom_sf"/>
</dbReference>
<dbReference type="InterPro" id="IPR002501">
    <property type="entry name" value="PsdUridine_synth_N"/>
</dbReference>
<dbReference type="InterPro" id="IPR002478">
    <property type="entry name" value="PUA"/>
</dbReference>
<dbReference type="InterPro" id="IPR015947">
    <property type="entry name" value="PUA-like_sf"/>
</dbReference>
<dbReference type="InterPro" id="IPR036974">
    <property type="entry name" value="PUA_sf"/>
</dbReference>
<dbReference type="InterPro" id="IPR004802">
    <property type="entry name" value="tRNA_PsdUridine_synth_B_fam"/>
</dbReference>
<dbReference type="InterPro" id="IPR026326">
    <property type="entry name" value="TruB_arch"/>
</dbReference>
<dbReference type="InterPro" id="IPR032819">
    <property type="entry name" value="TruB_C"/>
</dbReference>
<dbReference type="InterPro" id="IPR004521">
    <property type="entry name" value="Uncharacterised_CHP00451"/>
</dbReference>
<dbReference type="NCBIfam" id="TIGR00425">
    <property type="entry name" value="CBF5"/>
    <property type="match status" value="1"/>
</dbReference>
<dbReference type="NCBIfam" id="NF003280">
    <property type="entry name" value="PRK04270.1"/>
    <property type="match status" value="1"/>
</dbReference>
<dbReference type="NCBIfam" id="TIGR00451">
    <property type="entry name" value="unchar_dom_2"/>
    <property type="match status" value="1"/>
</dbReference>
<dbReference type="PANTHER" id="PTHR23127">
    <property type="entry name" value="CENTROMERE/MICROTUBULE BINDING PROTEIN CBF5"/>
    <property type="match status" value="1"/>
</dbReference>
<dbReference type="PANTHER" id="PTHR23127:SF0">
    <property type="entry name" value="H_ACA RIBONUCLEOPROTEIN COMPLEX SUBUNIT DKC1"/>
    <property type="match status" value="1"/>
</dbReference>
<dbReference type="Pfam" id="PF08068">
    <property type="entry name" value="DKCLD"/>
    <property type="match status" value="1"/>
</dbReference>
<dbReference type="Pfam" id="PF01472">
    <property type="entry name" value="PUA"/>
    <property type="match status" value="1"/>
</dbReference>
<dbReference type="Pfam" id="PF16198">
    <property type="entry name" value="TruB_C_2"/>
    <property type="match status" value="1"/>
</dbReference>
<dbReference type="Pfam" id="PF01509">
    <property type="entry name" value="TruB_N"/>
    <property type="match status" value="1"/>
</dbReference>
<dbReference type="SMART" id="SM01136">
    <property type="entry name" value="DKCLD"/>
    <property type="match status" value="1"/>
</dbReference>
<dbReference type="SMART" id="SM00359">
    <property type="entry name" value="PUA"/>
    <property type="match status" value="1"/>
</dbReference>
<dbReference type="SUPFAM" id="SSF55120">
    <property type="entry name" value="Pseudouridine synthase"/>
    <property type="match status" value="1"/>
</dbReference>
<dbReference type="SUPFAM" id="SSF88697">
    <property type="entry name" value="PUA domain-like"/>
    <property type="match status" value="1"/>
</dbReference>
<dbReference type="PROSITE" id="PS50890">
    <property type="entry name" value="PUA"/>
    <property type="match status" value="1"/>
</dbReference>
<protein>
    <recommendedName>
        <fullName evidence="1">Probable tRNA pseudouridine synthase B</fullName>
        <ecNumber evidence="1">5.4.99.25</ecNumber>
    </recommendedName>
    <alternativeName>
        <fullName evidence="1">tRNA pseudouridine(55) synthase</fullName>
        <shortName evidence="1">Psi55 synthase</shortName>
    </alternativeName>
    <alternativeName>
        <fullName evidence="1">tRNA pseudouridylate synthase</fullName>
    </alternativeName>
    <alternativeName>
        <fullName evidence="1">tRNA-uridine isomerase</fullName>
    </alternativeName>
</protein>
<sequence>MKCGSREVFVKLEEGTNPQWGKPPSSRSAEEHIRYSFLILDKPRGPTSHEVAAWVKKILGVERAGHSGTLDPKVSGVLPVAVAEGTKVLMALSRADKVYIAVAKFHGDVDVENLRRVLQELQGEIYQKPPLRSAVKRQLRTRRVYSLELLELDGRYAVLKMHVEAGTYARKLIHDLGEILGVGANMRELRRVAVSCFTEDEAVTLQDLADAYYIWKKYGDDTYLRRVLLPIEEIARPLPKIWVRDSAVDALCNGAPLAAPGVAKFEHPFSRGDLVAYFTLKGELIGIGRALVDSEEVKKMEKGLVARTDRVVMPRGTYPPMWRRGGKSFKSGT</sequence>
<evidence type="ECO:0000255" key="1">
    <source>
        <dbReference type="HAMAP-Rule" id="MF_01081"/>
    </source>
</evidence>
<organism>
    <name type="scientific">Pyrobaculum calidifontis (strain DSM 21063 / JCM 11548 / VA1)</name>
    <dbReference type="NCBI Taxonomy" id="410359"/>
    <lineage>
        <taxon>Archaea</taxon>
        <taxon>Thermoproteota</taxon>
        <taxon>Thermoprotei</taxon>
        <taxon>Thermoproteales</taxon>
        <taxon>Thermoproteaceae</taxon>
        <taxon>Pyrobaculum</taxon>
    </lineage>
</organism>
<keyword id="KW-0413">Isomerase</keyword>
<keyword id="KW-0819">tRNA processing</keyword>
<gene>
    <name evidence="1" type="primary">truB</name>
    <name type="ordered locus">Pcal_0054</name>
</gene>
<proteinExistence type="inferred from homology"/>